<organism>
    <name type="scientific">Streptococcus pyogenes serotype M6 (strain ATCC BAA-946 / MGAS10394)</name>
    <dbReference type="NCBI Taxonomy" id="286636"/>
    <lineage>
        <taxon>Bacteria</taxon>
        <taxon>Bacillati</taxon>
        <taxon>Bacillota</taxon>
        <taxon>Bacilli</taxon>
        <taxon>Lactobacillales</taxon>
        <taxon>Streptococcaceae</taxon>
        <taxon>Streptococcus</taxon>
    </lineage>
</organism>
<accession>Q5X9I4</accession>
<dbReference type="EMBL" id="CP000003">
    <property type="protein sequence ID" value="AAT87929.1"/>
    <property type="molecule type" value="Genomic_DNA"/>
</dbReference>
<dbReference type="RefSeq" id="WP_002982199.1">
    <property type="nucleotide sequence ID" value="NC_006086.1"/>
</dbReference>
<dbReference type="KEGG" id="spa:M6_Spy1794"/>
<dbReference type="HOGENOM" id="CLU_146610_2_1_9"/>
<dbReference type="Proteomes" id="UP000001167">
    <property type="component" value="Chromosome"/>
</dbReference>
<dbReference type="HAMAP" id="MF_01448">
    <property type="entry name" value="UPF0473"/>
    <property type="match status" value="1"/>
</dbReference>
<dbReference type="InterPro" id="IPR009711">
    <property type="entry name" value="UPF0473"/>
</dbReference>
<dbReference type="NCBIfam" id="NF010215">
    <property type="entry name" value="PRK13678.1-2"/>
    <property type="match status" value="1"/>
</dbReference>
<dbReference type="NCBIfam" id="NF010217">
    <property type="entry name" value="PRK13678.1-4"/>
    <property type="match status" value="1"/>
</dbReference>
<dbReference type="PANTHER" id="PTHR40066">
    <property type="entry name" value="UPF0473 PROTEIN CBO2561/CLC_2432"/>
    <property type="match status" value="1"/>
</dbReference>
<dbReference type="PANTHER" id="PTHR40066:SF1">
    <property type="entry name" value="UPF0473 PROTEIN CBO2561_CLC_2432"/>
    <property type="match status" value="1"/>
</dbReference>
<dbReference type="Pfam" id="PF06949">
    <property type="entry name" value="DUF1292"/>
    <property type="match status" value="1"/>
</dbReference>
<evidence type="ECO:0000255" key="1">
    <source>
        <dbReference type="HAMAP-Rule" id="MF_01448"/>
    </source>
</evidence>
<protein>
    <recommendedName>
        <fullName evidence="1">UPF0473 protein M6_Spy1794</fullName>
    </recommendedName>
</protein>
<gene>
    <name type="ordered locus">M6_Spy1794</name>
</gene>
<sequence length="101" mass="11545">MTHNHENDHQHEVITLVDEQGNETLFEILLTIDGREEFGKNYVLLVPAGSEEDESGEIEIQAYSFTENEDGTEGDLQPIPEDSDAEWDMIEEVFNSFLDEN</sequence>
<name>Y1794_STRP6</name>
<comment type="similarity">
    <text evidence="1">Belongs to the UPF0473 family.</text>
</comment>
<proteinExistence type="inferred from homology"/>
<feature type="chain" id="PRO_0000304868" description="UPF0473 protein M6_Spy1794">
    <location>
        <begin position="1"/>
        <end position="101"/>
    </location>
</feature>
<reference key="1">
    <citation type="journal article" date="2004" name="J. Infect. Dis.">
        <title>Progress toward characterization of the group A Streptococcus metagenome: complete genome sequence of a macrolide-resistant serotype M6 strain.</title>
        <authorList>
            <person name="Banks D.J."/>
            <person name="Porcella S.F."/>
            <person name="Barbian K.D."/>
            <person name="Beres S.B."/>
            <person name="Philips L.E."/>
            <person name="Voyich J.M."/>
            <person name="DeLeo F.R."/>
            <person name="Martin J.M."/>
            <person name="Somerville G.A."/>
            <person name="Musser J.M."/>
        </authorList>
    </citation>
    <scope>NUCLEOTIDE SEQUENCE [LARGE SCALE GENOMIC DNA]</scope>
    <source>
        <strain>ATCC BAA-946 / MGAS10394</strain>
    </source>
</reference>